<comment type="function">
    <text evidence="1">Catalyzes a salvage reaction resulting in the formation of IMP that is energically less costly than de novo synthesis.</text>
</comment>
<comment type="catalytic activity">
    <reaction evidence="1">
        <text>IMP + diphosphate = hypoxanthine + 5-phospho-alpha-D-ribose 1-diphosphate</text>
        <dbReference type="Rhea" id="RHEA:17973"/>
        <dbReference type="ChEBI" id="CHEBI:17368"/>
        <dbReference type="ChEBI" id="CHEBI:33019"/>
        <dbReference type="ChEBI" id="CHEBI:58017"/>
        <dbReference type="ChEBI" id="CHEBI:58053"/>
        <dbReference type="EC" id="2.4.2.8"/>
    </reaction>
</comment>
<comment type="catalytic activity">
    <reaction evidence="1">
        <text>GMP + diphosphate = guanine + 5-phospho-alpha-D-ribose 1-diphosphate</text>
        <dbReference type="Rhea" id="RHEA:25424"/>
        <dbReference type="ChEBI" id="CHEBI:16235"/>
        <dbReference type="ChEBI" id="CHEBI:33019"/>
        <dbReference type="ChEBI" id="CHEBI:58017"/>
        <dbReference type="ChEBI" id="CHEBI:58115"/>
        <dbReference type="EC" id="2.4.2.8"/>
    </reaction>
</comment>
<comment type="pathway">
    <text evidence="1">Purine metabolism; IMP biosynthesis via salvage pathway; IMP from hypoxanthine: step 1/1.</text>
</comment>
<comment type="subunit">
    <text evidence="1">Homodimer.</text>
</comment>
<comment type="subcellular location">
    <subcellularLocation>
        <location evidence="1">Cytoplasm</location>
    </subcellularLocation>
</comment>
<comment type="similarity">
    <text evidence="1">Belongs to the purine/pyrimidine phosphoribosyltransferase family. Archaeal HPRT subfamily.</text>
</comment>
<keyword id="KW-0963">Cytoplasm</keyword>
<keyword id="KW-0328">Glycosyltransferase</keyword>
<keyword id="KW-0660">Purine salvage</keyword>
<keyword id="KW-1185">Reference proteome</keyword>
<keyword id="KW-0808">Transferase</keyword>
<name>HPRT_METFV</name>
<reference key="1">
    <citation type="journal article" date="2010" name="Stand. Genomic Sci.">
        <title>Complete genome sequence of Methanothermus fervidus type strain (V24S).</title>
        <authorList>
            <person name="Anderson I."/>
            <person name="Djao O.D."/>
            <person name="Misra M."/>
            <person name="Chertkov O."/>
            <person name="Nolan M."/>
            <person name="Lucas S."/>
            <person name="Lapidus A."/>
            <person name="Del Rio T.G."/>
            <person name="Tice H."/>
            <person name="Cheng J.F."/>
            <person name="Tapia R."/>
            <person name="Han C."/>
            <person name="Goodwin L."/>
            <person name="Pitluck S."/>
            <person name="Liolios K."/>
            <person name="Ivanova N."/>
            <person name="Mavromatis K."/>
            <person name="Mikhailova N."/>
            <person name="Pati A."/>
            <person name="Brambilla E."/>
            <person name="Chen A."/>
            <person name="Palaniappan K."/>
            <person name="Land M."/>
            <person name="Hauser L."/>
            <person name="Chang Y.J."/>
            <person name="Jeffries C.D."/>
            <person name="Sikorski J."/>
            <person name="Spring S."/>
            <person name="Rohde M."/>
            <person name="Eichinger K."/>
            <person name="Huber H."/>
            <person name="Wirth R."/>
            <person name="Goker M."/>
            <person name="Detter J.C."/>
            <person name="Woyke T."/>
            <person name="Bristow J."/>
            <person name="Eisen J.A."/>
            <person name="Markowitz V."/>
            <person name="Hugenholtz P."/>
            <person name="Klenk H.P."/>
            <person name="Kyrpides N.C."/>
        </authorList>
    </citation>
    <scope>NUCLEOTIDE SEQUENCE [LARGE SCALE GENOMIC DNA]</scope>
    <source>
        <strain>ATCC 43054 / DSM 2088 / JCM 10308 / V24 S</strain>
    </source>
</reference>
<evidence type="ECO:0000255" key="1">
    <source>
        <dbReference type="HAMAP-Rule" id="MF_01467"/>
    </source>
</evidence>
<sequence length="189" mass="20682">MLEKLKSTLEKSPVIKKGEYHYFVSPVTDGIPLTEPNLLMEIVDAIEKKFDLEDIDKIVCIEAMGIHLATALSIKTGIPFVVIRKKKYGLPGEVEIRQVTGYGESNLYVNGVNSGDKILVIDDVVSTGGTLISVINALKKISADIKYVIAVVEKGEGRKKVEKETGTKVNTLVKVDVIDGEVKIINNEV</sequence>
<accession>E3GW42</accession>
<organism>
    <name type="scientific">Methanothermus fervidus (strain ATCC 43054 / DSM 2088 / JCM 10308 / V24 S)</name>
    <dbReference type="NCBI Taxonomy" id="523846"/>
    <lineage>
        <taxon>Archaea</taxon>
        <taxon>Methanobacteriati</taxon>
        <taxon>Methanobacteriota</taxon>
        <taxon>Methanomada group</taxon>
        <taxon>Methanobacteria</taxon>
        <taxon>Methanobacteriales</taxon>
        <taxon>Methanothermaceae</taxon>
        <taxon>Methanothermus</taxon>
    </lineage>
</organism>
<feature type="chain" id="PRO_0000415486" description="Hypoxanthine/guanine phosphoribosyltransferase">
    <location>
        <begin position="1"/>
        <end position="189"/>
    </location>
</feature>
<gene>
    <name evidence="1" type="primary">hpt</name>
    <name type="ordered locus">Mfer_1012</name>
</gene>
<dbReference type="EC" id="2.4.2.8" evidence="1"/>
<dbReference type="EMBL" id="CP002278">
    <property type="protein sequence ID" value="ADP77807.1"/>
    <property type="molecule type" value="Genomic_DNA"/>
</dbReference>
<dbReference type="SMR" id="E3GW42"/>
<dbReference type="STRING" id="523846.Mfer_1012"/>
<dbReference type="KEGG" id="mfv:Mfer_1012"/>
<dbReference type="HOGENOM" id="CLU_126376_0_0_2"/>
<dbReference type="OrthoDB" id="8323at2157"/>
<dbReference type="UniPathway" id="UPA00591">
    <property type="reaction ID" value="UER00648"/>
</dbReference>
<dbReference type="Proteomes" id="UP000002315">
    <property type="component" value="Chromosome"/>
</dbReference>
<dbReference type="GO" id="GO:0005737">
    <property type="term" value="C:cytoplasm"/>
    <property type="evidence" value="ECO:0007669"/>
    <property type="project" value="UniProtKB-SubCell"/>
</dbReference>
<dbReference type="GO" id="GO:0052657">
    <property type="term" value="F:guanine phosphoribosyltransferase activity"/>
    <property type="evidence" value="ECO:0007669"/>
    <property type="project" value="RHEA"/>
</dbReference>
<dbReference type="GO" id="GO:0004422">
    <property type="term" value="F:hypoxanthine phosphoribosyltransferase activity"/>
    <property type="evidence" value="ECO:0007669"/>
    <property type="project" value="UniProtKB-UniRule"/>
</dbReference>
<dbReference type="GO" id="GO:0032264">
    <property type="term" value="P:IMP salvage"/>
    <property type="evidence" value="ECO:0007669"/>
    <property type="project" value="UniProtKB-UniRule"/>
</dbReference>
<dbReference type="GO" id="GO:0006166">
    <property type="term" value="P:purine ribonucleoside salvage"/>
    <property type="evidence" value="ECO:0007669"/>
    <property type="project" value="UniProtKB-KW"/>
</dbReference>
<dbReference type="CDD" id="cd06223">
    <property type="entry name" value="PRTases_typeI"/>
    <property type="match status" value="1"/>
</dbReference>
<dbReference type="Gene3D" id="3.40.50.2020">
    <property type="match status" value="1"/>
</dbReference>
<dbReference type="HAMAP" id="MF_01467">
    <property type="entry name" value="Hypx_phosphoribosyltr"/>
    <property type="match status" value="1"/>
</dbReference>
<dbReference type="InterPro" id="IPR026597">
    <property type="entry name" value="HGPRTase-like"/>
</dbReference>
<dbReference type="InterPro" id="IPR000836">
    <property type="entry name" value="PRibTrfase_dom"/>
</dbReference>
<dbReference type="InterPro" id="IPR029057">
    <property type="entry name" value="PRTase-like"/>
</dbReference>
<dbReference type="InterPro" id="IPR050118">
    <property type="entry name" value="Pur/Pyrimidine_PRTase"/>
</dbReference>
<dbReference type="NCBIfam" id="NF040646">
    <property type="entry name" value="HPT_Archaea"/>
    <property type="match status" value="1"/>
</dbReference>
<dbReference type="NCBIfam" id="NF002635">
    <property type="entry name" value="PRK02304.1-4"/>
    <property type="match status" value="1"/>
</dbReference>
<dbReference type="PANTHER" id="PTHR43864">
    <property type="entry name" value="HYPOXANTHINE/GUANINE PHOSPHORIBOSYLTRANSFERASE"/>
    <property type="match status" value="1"/>
</dbReference>
<dbReference type="PANTHER" id="PTHR43864:SF1">
    <property type="entry name" value="XANTHINE PHOSPHORIBOSYLTRANSFERASE"/>
    <property type="match status" value="1"/>
</dbReference>
<dbReference type="Pfam" id="PF00156">
    <property type="entry name" value="Pribosyltran"/>
    <property type="match status" value="1"/>
</dbReference>
<dbReference type="SUPFAM" id="SSF53271">
    <property type="entry name" value="PRTase-like"/>
    <property type="match status" value="1"/>
</dbReference>
<dbReference type="PROSITE" id="PS00103">
    <property type="entry name" value="PUR_PYR_PR_TRANSFER"/>
    <property type="match status" value="1"/>
</dbReference>
<proteinExistence type="inferred from homology"/>
<protein>
    <recommendedName>
        <fullName evidence="1">Hypoxanthine/guanine phosphoribosyltransferase</fullName>
        <shortName evidence="1">HGPRTase</shortName>
        <ecNumber evidence="1">2.4.2.8</ecNumber>
    </recommendedName>
</protein>